<name>Y693_AQUAE</name>
<feature type="signal peptide" evidence="1">
    <location>
        <begin position="1"/>
        <end position="18"/>
    </location>
</feature>
<feature type="chain" id="PRO_0000013617" description="Uncharacterized protein aq_693">
    <location>
        <begin position="19"/>
        <end position="414"/>
    </location>
</feature>
<dbReference type="EMBL" id="AE000657">
    <property type="protein sequence ID" value="AAC06877.1"/>
    <property type="molecule type" value="Genomic_DNA"/>
</dbReference>
<dbReference type="PIR" id="G70360">
    <property type="entry name" value="G70360"/>
</dbReference>
<dbReference type="RefSeq" id="NP_213475.1">
    <property type="nucleotide sequence ID" value="NC_000918.1"/>
</dbReference>
<dbReference type="RefSeq" id="WP_010880413.1">
    <property type="nucleotide sequence ID" value="NC_000918.1"/>
</dbReference>
<dbReference type="SMR" id="O66915"/>
<dbReference type="STRING" id="224324.aq_693"/>
<dbReference type="TCDB" id="1.B.16.2.6">
    <property type="family name" value="the short chain amide and urea porin (sap) family"/>
</dbReference>
<dbReference type="EnsemblBacteria" id="AAC06877">
    <property type="protein sequence ID" value="AAC06877"/>
    <property type="gene ID" value="aq_693"/>
</dbReference>
<dbReference type="KEGG" id="aae:aq_693"/>
<dbReference type="eggNOG" id="COG3746">
    <property type="taxonomic scope" value="Bacteria"/>
</dbReference>
<dbReference type="HOGENOM" id="CLU_695843_0_0_0"/>
<dbReference type="InParanoid" id="O66915"/>
<dbReference type="OrthoDB" id="5442696at2"/>
<dbReference type="Proteomes" id="UP000000798">
    <property type="component" value="Chromosome"/>
</dbReference>
<dbReference type="Gene3D" id="2.40.160.10">
    <property type="entry name" value="Porin"/>
    <property type="match status" value="1"/>
</dbReference>
<dbReference type="InterPro" id="IPR023614">
    <property type="entry name" value="Porin_dom_sf"/>
</dbReference>
<dbReference type="InterPro" id="IPR010870">
    <property type="entry name" value="Porin_O/P"/>
</dbReference>
<dbReference type="Pfam" id="PF07396">
    <property type="entry name" value="Porin_O_P"/>
    <property type="match status" value="1"/>
</dbReference>
<dbReference type="SUPFAM" id="SSF56935">
    <property type="entry name" value="Porins"/>
    <property type="match status" value="1"/>
</dbReference>
<reference key="1">
    <citation type="journal article" date="1998" name="Nature">
        <title>The complete genome of the hyperthermophilic bacterium Aquifex aeolicus.</title>
        <authorList>
            <person name="Deckert G."/>
            <person name="Warren P.V."/>
            <person name="Gaasterland T."/>
            <person name="Young W.G."/>
            <person name="Lenox A.L."/>
            <person name="Graham D.E."/>
            <person name="Overbeek R."/>
            <person name="Snead M.A."/>
            <person name="Keller M."/>
            <person name="Aujay M."/>
            <person name="Huber R."/>
            <person name="Feldman R.A."/>
            <person name="Short J.M."/>
            <person name="Olsen G.J."/>
            <person name="Swanson R.V."/>
        </authorList>
    </citation>
    <scope>NUCLEOTIDE SEQUENCE [LARGE SCALE GENOMIC DNA]</scope>
    <source>
        <strain>VF5</strain>
    </source>
</reference>
<proteinExistence type="inferred from homology"/>
<sequence>MLKRLMLASAILPVVSFAESDPLDVLLKKLEEKGVITKEEAKEVKKVAKKHPHLKVKIRLQPRIDFGDIYKENNDYKSRSDFYFRRVRLEISKEWKNIPFGKKLKINFTLHSDKGERDYDYKKGEKEHHSFDPKVKYAYADWTFVDEFAVRIGKNKIPYSRVSLTSSSRQLLIERPYVTEDAKKWLGDYDSNQIMFHGKVAGGIFRYMLSIWDGSTIESKNKTGGTVKADTSLGDAYAIRLEFSPPGFVEKKKDDTGIGEKNKGDVISVGLNYAKNSDFDITDKNIKNEEATVWGGDIFGRFHLGPGALVAQAEYVKMKYDKLDLEEKGYYIQAGYLIPTPYGKFEPAARYEHFKQEDKKNDVTKHKKDIITLGFNHYIKGHKIKWGYNVLFIDNKEKDEKDQTVHQIQMQFYF</sequence>
<evidence type="ECO:0000255" key="1"/>
<organism>
    <name type="scientific">Aquifex aeolicus (strain VF5)</name>
    <dbReference type="NCBI Taxonomy" id="224324"/>
    <lineage>
        <taxon>Bacteria</taxon>
        <taxon>Pseudomonadati</taxon>
        <taxon>Aquificota</taxon>
        <taxon>Aquificia</taxon>
        <taxon>Aquificales</taxon>
        <taxon>Aquificaceae</taxon>
        <taxon>Aquifex</taxon>
    </lineage>
</organism>
<gene>
    <name type="ordered locus">aq_693</name>
</gene>
<accession>O66915</accession>
<protein>
    <recommendedName>
        <fullName>Uncharacterized protein aq_693</fullName>
    </recommendedName>
</protein>
<keyword id="KW-1185">Reference proteome</keyword>
<keyword id="KW-0732">Signal</keyword>